<name>UTP22_YEAST</name>
<gene>
    <name type="primary">UTP22</name>
    <name type="ordered locus">YGR090W</name>
</gene>
<feature type="chain" id="PRO_0000215651" description="U3 small nucleolar RNA-associated protein 22">
    <location>
        <begin position="1"/>
        <end position="1237"/>
    </location>
</feature>
<feature type="region of interest" description="Disordered" evidence="1">
    <location>
        <begin position="1"/>
        <end position="78"/>
    </location>
</feature>
<feature type="compositionally biased region" description="Polar residues" evidence="1">
    <location>
        <begin position="61"/>
        <end position="78"/>
    </location>
</feature>
<feature type="modified residue" description="Phosphoserine" evidence="8 9 10 11">
    <location>
        <position position="10"/>
    </location>
</feature>
<feature type="modified residue" description="Phosphoserine" evidence="11">
    <location>
        <position position="58"/>
    </location>
</feature>
<feature type="modified residue" description="Phosphothreonine" evidence="11">
    <location>
        <position position="60"/>
    </location>
</feature>
<feature type="modified residue" description="Phosphoserine" evidence="11">
    <location>
        <position position="64"/>
    </location>
</feature>
<feature type="helix" evidence="12">
    <location>
        <begin position="82"/>
        <end position="114"/>
    </location>
</feature>
<feature type="helix" evidence="12">
    <location>
        <begin position="118"/>
        <end position="136"/>
    </location>
</feature>
<feature type="helix" evidence="12">
    <location>
        <begin position="146"/>
        <end position="154"/>
    </location>
</feature>
<feature type="helix" evidence="12">
    <location>
        <begin position="169"/>
        <end position="171"/>
    </location>
</feature>
<feature type="strand" evidence="12">
    <location>
        <begin position="182"/>
        <end position="186"/>
    </location>
</feature>
<feature type="helix" evidence="12">
    <location>
        <begin position="187"/>
        <end position="190"/>
    </location>
</feature>
<feature type="strand" evidence="12">
    <location>
        <begin position="201"/>
        <end position="208"/>
    </location>
</feature>
<feature type="helix" evidence="12">
    <location>
        <begin position="211"/>
        <end position="213"/>
    </location>
</feature>
<feature type="turn" evidence="12">
    <location>
        <begin position="216"/>
        <end position="219"/>
    </location>
</feature>
<feature type="helix" evidence="12">
    <location>
        <begin position="223"/>
        <end position="245"/>
    </location>
</feature>
<feature type="helix" evidence="12">
    <location>
        <begin position="248"/>
        <end position="250"/>
    </location>
</feature>
<feature type="strand" evidence="12">
    <location>
        <begin position="252"/>
        <end position="258"/>
    </location>
</feature>
<feature type="helix" evidence="12">
    <location>
        <begin position="259"/>
        <end position="261"/>
    </location>
</feature>
<feature type="strand" evidence="12">
    <location>
        <begin position="266"/>
        <end position="272"/>
    </location>
</feature>
<feature type="helix" evidence="12">
    <location>
        <begin position="286"/>
        <end position="288"/>
    </location>
</feature>
<feature type="strand" evidence="12">
    <location>
        <begin position="290"/>
        <end position="297"/>
    </location>
</feature>
<feature type="helix" evidence="12">
    <location>
        <begin position="305"/>
        <end position="308"/>
    </location>
</feature>
<feature type="helix" evidence="12">
    <location>
        <begin position="330"/>
        <end position="338"/>
    </location>
</feature>
<feature type="helix" evidence="12">
    <location>
        <begin position="342"/>
        <end position="355"/>
    </location>
</feature>
<feature type="helix" evidence="12">
    <location>
        <begin position="359"/>
        <end position="372"/>
    </location>
</feature>
<feature type="turn" evidence="12">
    <location>
        <begin position="381"/>
        <end position="383"/>
    </location>
</feature>
<feature type="helix" evidence="12">
    <location>
        <begin position="390"/>
        <end position="400"/>
    </location>
</feature>
<feature type="strand" evidence="12">
    <location>
        <begin position="402"/>
        <end position="405"/>
    </location>
</feature>
<feature type="strand" evidence="12">
    <location>
        <begin position="410"/>
        <end position="412"/>
    </location>
</feature>
<feature type="helix" evidence="12">
    <location>
        <begin position="418"/>
        <end position="431"/>
    </location>
</feature>
<feature type="strand" evidence="12">
    <location>
        <begin position="435"/>
        <end position="437"/>
    </location>
</feature>
<feature type="strand" evidence="12">
    <location>
        <begin position="439"/>
        <end position="442"/>
    </location>
</feature>
<feature type="strand" evidence="12">
    <location>
        <begin position="455"/>
        <end position="459"/>
    </location>
</feature>
<feature type="strand" evidence="12">
    <location>
        <begin position="467"/>
        <end position="469"/>
    </location>
</feature>
<feature type="turn" evidence="12">
    <location>
        <begin position="470"/>
        <end position="472"/>
    </location>
</feature>
<feature type="turn" evidence="12">
    <location>
        <begin position="476"/>
        <end position="479"/>
    </location>
</feature>
<feature type="helix" evidence="12">
    <location>
        <begin position="482"/>
        <end position="499"/>
    </location>
</feature>
<feature type="strand" evidence="12">
    <location>
        <begin position="502"/>
        <end position="504"/>
    </location>
</feature>
<feature type="helix" evidence="12">
    <location>
        <begin position="507"/>
        <end position="511"/>
    </location>
</feature>
<feature type="helix" evidence="12">
    <location>
        <begin position="519"/>
        <end position="522"/>
    </location>
</feature>
<feature type="strand" evidence="12">
    <location>
        <begin position="523"/>
        <end position="530"/>
    </location>
</feature>
<feature type="helix" evidence="12">
    <location>
        <begin position="536"/>
        <end position="538"/>
    </location>
</feature>
<feature type="helix" evidence="12">
    <location>
        <begin position="539"/>
        <end position="542"/>
    </location>
</feature>
<feature type="helix" evidence="12">
    <location>
        <begin position="549"/>
        <end position="555"/>
    </location>
</feature>
<feature type="helix" evidence="12">
    <location>
        <begin position="558"/>
        <end position="574"/>
    </location>
</feature>
<feature type="helix" evidence="12">
    <location>
        <begin position="575"/>
        <end position="577"/>
    </location>
</feature>
<feature type="strand" evidence="12">
    <location>
        <begin position="578"/>
        <end position="586"/>
    </location>
</feature>
<feature type="strand" evidence="12">
    <location>
        <begin position="596"/>
        <end position="598"/>
    </location>
</feature>
<feature type="helix" evidence="12">
    <location>
        <begin position="603"/>
        <end position="605"/>
    </location>
</feature>
<feature type="strand" evidence="12">
    <location>
        <begin position="606"/>
        <end position="609"/>
    </location>
</feature>
<feature type="strand" evidence="12">
    <location>
        <begin position="611"/>
        <end position="619"/>
    </location>
</feature>
<feature type="turn" evidence="12">
    <location>
        <begin position="621"/>
        <end position="625"/>
    </location>
</feature>
<feature type="strand" evidence="12">
    <location>
        <begin position="627"/>
        <end position="633"/>
    </location>
</feature>
<feature type="helix" evidence="12">
    <location>
        <begin position="640"/>
        <end position="649"/>
    </location>
</feature>
<feature type="helix" evidence="12">
    <location>
        <begin position="650"/>
        <end position="652"/>
    </location>
</feature>
<feature type="strand" evidence="12">
    <location>
        <begin position="653"/>
        <end position="657"/>
    </location>
</feature>
<feature type="strand" evidence="12">
    <location>
        <begin position="663"/>
        <end position="668"/>
    </location>
</feature>
<feature type="strand" evidence="12">
    <location>
        <begin position="673"/>
        <end position="675"/>
    </location>
</feature>
<feature type="helix" evidence="12">
    <location>
        <begin position="677"/>
        <end position="689"/>
    </location>
</feature>
<feature type="strand" evidence="12">
    <location>
        <begin position="695"/>
        <end position="697"/>
    </location>
</feature>
<feature type="helix" evidence="12">
    <location>
        <begin position="699"/>
        <end position="706"/>
    </location>
</feature>
<feature type="strand" evidence="12">
    <location>
        <begin position="711"/>
        <end position="713"/>
    </location>
</feature>
<feature type="helix" evidence="12">
    <location>
        <begin position="716"/>
        <end position="718"/>
    </location>
</feature>
<feature type="helix" evidence="12">
    <location>
        <begin position="725"/>
        <end position="742"/>
    </location>
</feature>
<feature type="strand" evidence="12">
    <location>
        <begin position="750"/>
        <end position="755"/>
    </location>
</feature>
<feature type="helix" evidence="12">
    <location>
        <begin position="758"/>
        <end position="761"/>
    </location>
</feature>
<feature type="strand" evidence="12">
    <location>
        <begin position="779"/>
        <end position="786"/>
    </location>
</feature>
<feature type="helix" evidence="12">
    <location>
        <begin position="796"/>
        <end position="817"/>
    </location>
</feature>
<feature type="strand" evidence="12">
    <location>
        <begin position="821"/>
        <end position="827"/>
    </location>
</feature>
<feature type="strand" evidence="12">
    <location>
        <begin position="838"/>
        <end position="843"/>
    </location>
</feature>
<feature type="strand" evidence="12">
    <location>
        <begin position="849"/>
        <end position="855"/>
    </location>
</feature>
<feature type="helix" evidence="12">
    <location>
        <begin position="859"/>
        <end position="869"/>
    </location>
</feature>
<feature type="turn" evidence="12">
    <location>
        <begin position="872"/>
        <end position="874"/>
    </location>
</feature>
<feature type="helix" evidence="12">
    <location>
        <begin position="875"/>
        <end position="889"/>
    </location>
</feature>
<feature type="helix" evidence="12">
    <location>
        <begin position="892"/>
        <end position="903"/>
    </location>
</feature>
<feature type="helix" evidence="12">
    <location>
        <begin position="909"/>
        <end position="922"/>
    </location>
</feature>
<feature type="turn" evidence="12">
    <location>
        <begin position="926"/>
        <end position="928"/>
    </location>
</feature>
<feature type="helix" evidence="12">
    <location>
        <begin position="931"/>
        <end position="943"/>
    </location>
</feature>
<feature type="helix" evidence="12">
    <location>
        <begin position="954"/>
        <end position="967"/>
    </location>
</feature>
<feature type="turn" evidence="12">
    <location>
        <begin position="970"/>
        <end position="972"/>
    </location>
</feature>
<feature type="helix" evidence="12">
    <location>
        <begin position="1014"/>
        <end position="1030"/>
    </location>
</feature>
<feature type="strand" evidence="12">
    <location>
        <begin position="1034"/>
        <end position="1036"/>
    </location>
</feature>
<feature type="turn" evidence="12">
    <location>
        <begin position="1051"/>
        <end position="1055"/>
    </location>
</feature>
<feature type="helix" evidence="12">
    <location>
        <begin position="1058"/>
        <end position="1078"/>
    </location>
</feature>
<feature type="helix" evidence="12">
    <location>
        <begin position="1082"/>
        <end position="1088"/>
    </location>
</feature>
<feature type="strand" evidence="12">
    <location>
        <begin position="1097"/>
        <end position="1103"/>
    </location>
</feature>
<feature type="turn" evidence="12">
    <location>
        <begin position="1109"/>
        <end position="1113"/>
    </location>
</feature>
<feature type="helix" evidence="12">
    <location>
        <begin position="1136"/>
        <end position="1142"/>
    </location>
</feature>
<feature type="helix" evidence="12">
    <location>
        <begin position="1145"/>
        <end position="1157"/>
    </location>
</feature>
<feature type="turn" evidence="12">
    <location>
        <begin position="1158"/>
        <end position="1160"/>
    </location>
</feature>
<feature type="strand" evidence="12">
    <location>
        <begin position="1161"/>
        <end position="1165"/>
    </location>
</feature>
<feature type="helix" evidence="12">
    <location>
        <begin position="1169"/>
        <end position="1172"/>
    </location>
</feature>
<feature type="turn" evidence="12">
    <location>
        <begin position="1174"/>
        <end position="1177"/>
    </location>
</feature>
<feature type="strand" evidence="12">
    <location>
        <begin position="1179"/>
        <end position="1186"/>
    </location>
</feature>
<feature type="helix" evidence="12">
    <location>
        <begin position="1188"/>
        <end position="1190"/>
    </location>
</feature>
<feature type="strand" evidence="12">
    <location>
        <begin position="1204"/>
        <end position="1214"/>
    </location>
</feature>
<feature type="helix" evidence="12">
    <location>
        <begin position="1216"/>
        <end position="1227"/>
    </location>
</feature>
<feature type="helix" evidence="12">
    <location>
        <begin position="1228"/>
        <end position="1230"/>
    </location>
</feature>
<feature type="strand" evidence="12">
    <location>
        <begin position="1231"/>
        <end position="1236"/>
    </location>
</feature>
<organism>
    <name type="scientific">Saccharomyces cerevisiae (strain ATCC 204508 / S288c)</name>
    <name type="common">Baker's yeast</name>
    <dbReference type="NCBI Taxonomy" id="559292"/>
    <lineage>
        <taxon>Eukaryota</taxon>
        <taxon>Fungi</taxon>
        <taxon>Dikarya</taxon>
        <taxon>Ascomycota</taxon>
        <taxon>Saccharomycotina</taxon>
        <taxon>Saccharomycetes</taxon>
        <taxon>Saccharomycetales</taxon>
        <taxon>Saccharomycetaceae</taxon>
        <taxon>Saccharomyces</taxon>
    </lineage>
</organism>
<proteinExistence type="evidence at protein level"/>
<dbReference type="EMBL" id="Z72875">
    <property type="protein sequence ID" value="CAA97093.1"/>
    <property type="molecule type" value="Genomic_DNA"/>
</dbReference>
<dbReference type="EMBL" id="BK006941">
    <property type="protein sequence ID" value="DAA08183.1"/>
    <property type="molecule type" value="Genomic_DNA"/>
</dbReference>
<dbReference type="PIR" id="S64385">
    <property type="entry name" value="S64385"/>
</dbReference>
<dbReference type="RefSeq" id="NP_011604.3">
    <property type="nucleotide sequence ID" value="NM_001181219.3"/>
</dbReference>
<dbReference type="PDB" id="4M5D">
    <property type="method" value="X-ray"/>
    <property type="resolution" value="1.97 A"/>
    <property type="chains" value="A=1-1237"/>
</dbReference>
<dbReference type="PDB" id="5WLC">
    <property type="method" value="EM"/>
    <property type="resolution" value="3.80 A"/>
    <property type="chains" value="NH=1-1237"/>
</dbReference>
<dbReference type="PDB" id="5WYJ">
    <property type="method" value="EM"/>
    <property type="resolution" value="8.70 A"/>
    <property type="chains" value="CB=1-1237"/>
</dbReference>
<dbReference type="PDB" id="5WYK">
    <property type="method" value="EM"/>
    <property type="resolution" value="4.50 A"/>
    <property type="chains" value="CB=1-1237"/>
</dbReference>
<dbReference type="PDB" id="6KE6">
    <property type="method" value="EM"/>
    <property type="resolution" value="3.40 A"/>
    <property type="chains" value="RE=1-1237"/>
</dbReference>
<dbReference type="PDB" id="6LQP">
    <property type="method" value="EM"/>
    <property type="resolution" value="3.20 A"/>
    <property type="chains" value="RE=1-1237"/>
</dbReference>
<dbReference type="PDB" id="6LQQ">
    <property type="method" value="EM"/>
    <property type="resolution" value="4.10 A"/>
    <property type="chains" value="RE=1-1237"/>
</dbReference>
<dbReference type="PDB" id="6LQR">
    <property type="method" value="EM"/>
    <property type="resolution" value="8.60 A"/>
    <property type="chains" value="RE=1-1237"/>
</dbReference>
<dbReference type="PDB" id="6LQS">
    <property type="method" value="EM"/>
    <property type="resolution" value="3.80 A"/>
    <property type="chains" value="RE=1-1237"/>
</dbReference>
<dbReference type="PDB" id="6LQT">
    <property type="method" value="EM"/>
    <property type="resolution" value="4.90 A"/>
    <property type="chains" value="RE=1-1237"/>
</dbReference>
<dbReference type="PDB" id="6LQU">
    <property type="method" value="EM"/>
    <property type="resolution" value="3.70 A"/>
    <property type="chains" value="RE=1-1237"/>
</dbReference>
<dbReference type="PDB" id="6ZQA">
    <property type="method" value="EM"/>
    <property type="resolution" value="4.40 A"/>
    <property type="chains" value="UV=1-1237"/>
</dbReference>
<dbReference type="PDB" id="6ZQB">
    <property type="method" value="EM"/>
    <property type="resolution" value="3.90 A"/>
    <property type="chains" value="UV=1-1237"/>
</dbReference>
<dbReference type="PDB" id="6ZQC">
    <property type="method" value="EM"/>
    <property type="resolution" value="3.80 A"/>
    <property type="chains" value="UV=1-1237"/>
</dbReference>
<dbReference type="PDB" id="6ZQD">
    <property type="method" value="EM"/>
    <property type="resolution" value="3.80 A"/>
    <property type="chains" value="UV=1-1237"/>
</dbReference>
<dbReference type="PDB" id="6ZQE">
    <property type="method" value="EM"/>
    <property type="resolution" value="7.10 A"/>
    <property type="chains" value="UV=1-1237"/>
</dbReference>
<dbReference type="PDB" id="6ZQF">
    <property type="method" value="EM"/>
    <property type="resolution" value="4.90 A"/>
    <property type="chains" value="UV=1-1237"/>
</dbReference>
<dbReference type="PDB" id="7AJT">
    <property type="method" value="EM"/>
    <property type="resolution" value="4.60 A"/>
    <property type="chains" value="UV=1-1237"/>
</dbReference>
<dbReference type="PDB" id="7AJU">
    <property type="method" value="EM"/>
    <property type="resolution" value="3.80 A"/>
    <property type="chains" value="UV=1-1237"/>
</dbReference>
<dbReference type="PDB" id="7D4I">
    <property type="method" value="EM"/>
    <property type="resolution" value="4.00 A"/>
    <property type="chains" value="RE=1-1237"/>
</dbReference>
<dbReference type="PDB" id="7D5S">
    <property type="method" value="EM"/>
    <property type="resolution" value="4.60 A"/>
    <property type="chains" value="RE=1-1237"/>
</dbReference>
<dbReference type="PDB" id="7D5T">
    <property type="method" value="EM"/>
    <property type="resolution" value="6.00 A"/>
    <property type="chains" value="RE=1-1237"/>
</dbReference>
<dbReference type="PDB" id="7D63">
    <property type="method" value="EM"/>
    <property type="resolution" value="12.30 A"/>
    <property type="chains" value="RE=1-1237"/>
</dbReference>
<dbReference type="PDB" id="7SUK">
    <property type="method" value="EM"/>
    <property type="resolution" value="3.99 A"/>
    <property type="chains" value="NH=97-1237"/>
</dbReference>
<dbReference type="PDBsum" id="4M5D"/>
<dbReference type="PDBsum" id="5WLC"/>
<dbReference type="PDBsum" id="5WYJ"/>
<dbReference type="PDBsum" id="5WYK"/>
<dbReference type="PDBsum" id="6KE6"/>
<dbReference type="PDBsum" id="6LQP"/>
<dbReference type="PDBsum" id="6LQQ"/>
<dbReference type="PDBsum" id="6LQR"/>
<dbReference type="PDBsum" id="6LQS"/>
<dbReference type="PDBsum" id="6LQT"/>
<dbReference type="PDBsum" id="6LQU"/>
<dbReference type="PDBsum" id="6ZQA"/>
<dbReference type="PDBsum" id="6ZQB"/>
<dbReference type="PDBsum" id="6ZQC"/>
<dbReference type="PDBsum" id="6ZQD"/>
<dbReference type="PDBsum" id="6ZQE"/>
<dbReference type="PDBsum" id="6ZQF"/>
<dbReference type="PDBsum" id="7AJT"/>
<dbReference type="PDBsum" id="7AJU"/>
<dbReference type="PDBsum" id="7D4I"/>
<dbReference type="PDBsum" id="7D5S"/>
<dbReference type="PDBsum" id="7D5T"/>
<dbReference type="PDBsum" id="7D63"/>
<dbReference type="PDBsum" id="7SUK"/>
<dbReference type="EMDB" id="EMD-0949"/>
<dbReference type="EMDB" id="EMD-0950"/>
<dbReference type="EMDB" id="EMD-0951"/>
<dbReference type="EMDB" id="EMD-0952"/>
<dbReference type="EMDB" id="EMD-0953"/>
<dbReference type="EMDB" id="EMD-0954"/>
<dbReference type="EMDB" id="EMD-11357"/>
<dbReference type="EMDB" id="EMD-11358"/>
<dbReference type="EMDB" id="EMD-11359"/>
<dbReference type="EMDB" id="EMD-11360"/>
<dbReference type="EMDB" id="EMD-11361"/>
<dbReference type="EMDB" id="EMD-11362"/>
<dbReference type="EMDB" id="EMD-11807"/>
<dbReference type="EMDB" id="EMD-11808"/>
<dbReference type="EMDB" id="EMD-25441"/>
<dbReference type="EMDB" id="EMD-30574"/>
<dbReference type="EMDB" id="EMD-30584"/>
<dbReference type="EMDB" id="EMD-30585"/>
<dbReference type="EMDB" id="EMD-30588"/>
<dbReference type="EMDB" id="EMD-6695"/>
<dbReference type="EMDB" id="EMD-6696"/>
<dbReference type="EMDB" id="EMD-8859"/>
<dbReference type="EMDB" id="EMD-9964"/>
<dbReference type="SMR" id="P53254"/>
<dbReference type="BioGRID" id="33333">
    <property type="interactions" value="231"/>
</dbReference>
<dbReference type="ComplexPortal" id="CPX-1604">
    <property type="entry name" value="Small ribosomal subunit processome"/>
</dbReference>
<dbReference type="ComplexPortal" id="CPX-771">
    <property type="entry name" value="UTP-C complex variant 2"/>
</dbReference>
<dbReference type="ComplexPortal" id="CPX-772">
    <property type="entry name" value="UTP-C complex variant 1"/>
</dbReference>
<dbReference type="ComplexPortal" id="CPX-773">
    <property type="entry name" value="UTP-C complex variant 3"/>
</dbReference>
<dbReference type="ComplexPortal" id="CPX-774">
    <property type="entry name" value="CURI complex variant 1"/>
</dbReference>
<dbReference type="ComplexPortal" id="CPX-775">
    <property type="entry name" value="CURI complex variant 2"/>
</dbReference>
<dbReference type="ComplexPortal" id="CPX-776">
    <property type="entry name" value="CURI complex variant 3"/>
</dbReference>
<dbReference type="DIP" id="DIP-5304N"/>
<dbReference type="FunCoup" id="P53254">
    <property type="interactions" value="1294"/>
</dbReference>
<dbReference type="IntAct" id="P53254">
    <property type="interactions" value="136"/>
</dbReference>
<dbReference type="MINT" id="P53254"/>
<dbReference type="STRING" id="4932.YGR090W"/>
<dbReference type="iPTMnet" id="P53254"/>
<dbReference type="PaxDb" id="4932-YGR090W"/>
<dbReference type="PeptideAtlas" id="P53254"/>
<dbReference type="EnsemblFungi" id="YGR090W_mRNA">
    <property type="protein sequence ID" value="YGR090W"/>
    <property type="gene ID" value="YGR090W"/>
</dbReference>
<dbReference type="GeneID" id="852982"/>
<dbReference type="KEGG" id="sce:YGR090W"/>
<dbReference type="AGR" id="SGD:S000003322"/>
<dbReference type="SGD" id="S000003322">
    <property type="gene designation" value="UTP22"/>
</dbReference>
<dbReference type="VEuPathDB" id="FungiDB:YGR090W"/>
<dbReference type="eggNOG" id="KOG2054">
    <property type="taxonomic scope" value="Eukaryota"/>
</dbReference>
<dbReference type="GeneTree" id="ENSGT00390000018619"/>
<dbReference type="HOGENOM" id="CLU_003502_1_0_1"/>
<dbReference type="InParanoid" id="P53254"/>
<dbReference type="OMA" id="DERAHIP"/>
<dbReference type="OrthoDB" id="10251401at2759"/>
<dbReference type="BioCyc" id="YEAST:G3O-30800-MONOMER"/>
<dbReference type="Reactome" id="R-SCE-6791226">
    <property type="pathway name" value="Major pathway of rRNA processing in the nucleolus and cytosol"/>
</dbReference>
<dbReference type="BioGRID-ORCS" id="852982">
    <property type="hits" value="0 hits in 10 CRISPR screens"/>
</dbReference>
<dbReference type="CD-CODE" id="BDAE0F88">
    <property type="entry name" value="Nucleolus"/>
</dbReference>
<dbReference type="EvolutionaryTrace" id="P53254"/>
<dbReference type="PRO" id="PR:P53254"/>
<dbReference type="Proteomes" id="UP000002311">
    <property type="component" value="Chromosome VII"/>
</dbReference>
<dbReference type="RNAct" id="P53254">
    <property type="molecule type" value="protein"/>
</dbReference>
<dbReference type="GO" id="GO:0030686">
    <property type="term" value="C:90S preribosome"/>
    <property type="evidence" value="ECO:0007005"/>
    <property type="project" value="SGD"/>
</dbReference>
<dbReference type="GO" id="GO:0032545">
    <property type="term" value="C:CURI complex"/>
    <property type="evidence" value="ECO:0000314"/>
    <property type="project" value="SGD"/>
</dbReference>
<dbReference type="GO" id="GO:0005730">
    <property type="term" value="C:nucleolus"/>
    <property type="evidence" value="ECO:0000314"/>
    <property type="project" value="SGD"/>
</dbReference>
<dbReference type="GO" id="GO:0005654">
    <property type="term" value="C:nucleoplasm"/>
    <property type="evidence" value="ECO:0000304"/>
    <property type="project" value="Reactome"/>
</dbReference>
<dbReference type="GO" id="GO:0005634">
    <property type="term" value="C:nucleus"/>
    <property type="evidence" value="ECO:0007005"/>
    <property type="project" value="SGD"/>
</dbReference>
<dbReference type="GO" id="GO:0032040">
    <property type="term" value="C:small-subunit processome"/>
    <property type="evidence" value="ECO:0000314"/>
    <property type="project" value="SGD"/>
</dbReference>
<dbReference type="GO" id="GO:0034456">
    <property type="term" value="C:UTP-C complex"/>
    <property type="evidence" value="ECO:0000314"/>
    <property type="project" value="SGD"/>
</dbReference>
<dbReference type="GO" id="GO:0003723">
    <property type="term" value="F:RNA binding"/>
    <property type="evidence" value="ECO:0007669"/>
    <property type="project" value="UniProtKB-KW"/>
</dbReference>
<dbReference type="GO" id="GO:0030490">
    <property type="term" value="P:maturation of SSU-rRNA"/>
    <property type="evidence" value="ECO:0000303"/>
    <property type="project" value="ComplexPortal"/>
</dbReference>
<dbReference type="GO" id="GO:0042790">
    <property type="term" value="P:nucleolar large rRNA transcription by RNA polymerase I"/>
    <property type="evidence" value="ECO:0000314"/>
    <property type="project" value="ComplexPortal"/>
</dbReference>
<dbReference type="GO" id="GO:0060962">
    <property type="term" value="P:regulation of ribosomal protein gene transcription by RNA polymerase II"/>
    <property type="evidence" value="ECO:0000314"/>
    <property type="project" value="ComplexPortal"/>
</dbReference>
<dbReference type="GO" id="GO:0000028">
    <property type="term" value="P:ribosomal small subunit assembly"/>
    <property type="evidence" value="ECO:0000303"/>
    <property type="project" value="ComplexPortal"/>
</dbReference>
<dbReference type="GO" id="GO:0006364">
    <property type="term" value="P:rRNA processing"/>
    <property type="evidence" value="ECO:0000315"/>
    <property type="project" value="SGD"/>
</dbReference>
<dbReference type="GO" id="GO:0006409">
    <property type="term" value="P:tRNA export from nucleus"/>
    <property type="evidence" value="ECO:0000315"/>
    <property type="project" value="SGD"/>
</dbReference>
<dbReference type="FunFam" id="1.10.1410.10:FF:000020">
    <property type="entry name" value="U3 small nucleolar RNA-associated protein 22"/>
    <property type="match status" value="1"/>
</dbReference>
<dbReference type="FunFam" id="1.10.1410.10:FF:000022">
    <property type="entry name" value="U3 small nucleolar RNA-associated protein 22"/>
    <property type="match status" value="1"/>
</dbReference>
<dbReference type="FunFam" id="3.30.70.3020:FF:000001">
    <property type="entry name" value="U3 small nucleolar RNA-associated protein 22"/>
    <property type="match status" value="1"/>
</dbReference>
<dbReference type="FunFam" id="3.30.70.3030:FF:000002">
    <property type="entry name" value="U3 small nucleolar RNA-associated protein 22"/>
    <property type="match status" value="1"/>
</dbReference>
<dbReference type="Gene3D" id="1.10.1410.10">
    <property type="match status" value="2"/>
</dbReference>
<dbReference type="Gene3D" id="3.30.70.3020">
    <property type="match status" value="2"/>
</dbReference>
<dbReference type="Gene3D" id="3.30.70.3030">
    <property type="match status" value="1"/>
</dbReference>
<dbReference type="InterPro" id="IPR005554">
    <property type="entry name" value="NOL6/Upt22"/>
</dbReference>
<dbReference type="InterPro" id="IPR035082">
    <property type="entry name" value="Nrap_D1"/>
</dbReference>
<dbReference type="InterPro" id="IPR035367">
    <property type="entry name" value="Nrap_D2"/>
</dbReference>
<dbReference type="InterPro" id="IPR035368">
    <property type="entry name" value="Nrap_D3"/>
</dbReference>
<dbReference type="InterPro" id="IPR035369">
    <property type="entry name" value="Nrap_D4"/>
</dbReference>
<dbReference type="InterPro" id="IPR035370">
    <property type="entry name" value="Nrap_D5"/>
</dbReference>
<dbReference type="InterPro" id="IPR035371">
    <property type="entry name" value="Nrap_D6"/>
</dbReference>
<dbReference type="PANTHER" id="PTHR17972:SF0">
    <property type="entry name" value="NUCLEOLAR PROTEIN 6"/>
    <property type="match status" value="1"/>
</dbReference>
<dbReference type="PANTHER" id="PTHR17972">
    <property type="entry name" value="NUCLEOLAR RNA-ASSOCIATED PROTEIN"/>
    <property type="match status" value="1"/>
</dbReference>
<dbReference type="Pfam" id="PF03813">
    <property type="entry name" value="Nrap"/>
    <property type="match status" value="1"/>
</dbReference>
<dbReference type="Pfam" id="PF17403">
    <property type="entry name" value="Nrap_D2"/>
    <property type="match status" value="1"/>
</dbReference>
<dbReference type="Pfam" id="PF17404">
    <property type="entry name" value="Nrap_D3"/>
    <property type="match status" value="1"/>
</dbReference>
<dbReference type="Pfam" id="PF17405">
    <property type="entry name" value="Nrap_D4"/>
    <property type="match status" value="1"/>
</dbReference>
<dbReference type="Pfam" id="PF17406">
    <property type="entry name" value="Nrap_D5"/>
    <property type="match status" value="1"/>
</dbReference>
<dbReference type="Pfam" id="PF17407">
    <property type="entry name" value="Nrap_D6"/>
    <property type="match status" value="1"/>
</dbReference>
<evidence type="ECO:0000256" key="1">
    <source>
        <dbReference type="SAM" id="MobiDB-lite"/>
    </source>
</evidence>
<evidence type="ECO:0000269" key="2">
    <source>
    </source>
</evidence>
<evidence type="ECO:0000269" key="3">
    <source>
    </source>
</evidence>
<evidence type="ECO:0000269" key="4">
    <source>
    </source>
</evidence>
<evidence type="ECO:0000269" key="5">
    <source>
    </source>
</evidence>
<evidence type="ECO:0000269" key="6">
    <source>
    </source>
</evidence>
<evidence type="ECO:0000305" key="7"/>
<evidence type="ECO:0007744" key="8">
    <source>
    </source>
</evidence>
<evidence type="ECO:0007744" key="9">
    <source>
    </source>
</evidence>
<evidence type="ECO:0007744" key="10">
    <source>
    </source>
</evidence>
<evidence type="ECO:0007744" key="11">
    <source>
    </source>
</evidence>
<evidence type="ECO:0007829" key="12">
    <source>
        <dbReference type="PDB" id="4M5D"/>
    </source>
</evidence>
<sequence>MATSVKRKASETSDQNIVKVQKKHSTQDSTTDNGSKENDHSSQAINERTVPEQENDESDTSPESNEVATNTAATRHNGKVTATESYDIHIARETAELFKSNIFKLQIDELLEQVKLKQKHVLKVEKFLHKLYDILQEIPDWEEKSLAEVDSFFKNKIVSVPFVDPKPIPQNTNYKFNYKKPDISLIGSFALKAGIYQPNGSSIDTLLTMPKELFEKKDFLNFRCLHKRSVYLAYLTHHLLILLKKDKLDSFLQLEYSYFDNDPLLPILRISCSKPTGDSLSDYNFYKTRFSINLLIGFPYKVFEPKKLLPNRNCIRIAQESKEQSLPATPLYNFSVLSSSTHENYLKYLYKTKKQTESFVEATVLGRLWLQQRGFSSNMSHSGSLGGFGTFEFTILMAALLNGGGINSNKILLHGFSSYQLFKGVIKYLATMDLCHDGHLQFHSNPENSSSSPASKYIDEGFQTPTLFDKSTKVNILTKMTVSSYQILKEYAGETLRMLNNVVQDQFSNIFLTNISRFDNLKYDLCYDVQLPLGKYNNLETSLAATFGSMERVKFITLENFLAHKITNVARYALGDRIKYIQIEMVGQKSDFPITKRKVYSNTGGNHFNFDFVRVKLIVNPSECDKLVTKGPAHSETMSTEAAVFKNFWGIKSSLRRFKDGSITHCCVWSTSSSEPIISSIVNFALQKHVSKKAQISNETIKKFHNFLPLPNLPSSAKTSVLNLSSFFNLKKSFDDLYKIIFQMKLPLSVKSILPVGSAFRYTSLCQPVPFAYSDPDFFQDVILEFETSPKWPDEITSLEKAKTAFLLKIQEELSANSSTYRSFFSRDESIPYNLEIVTLNILTPEGYGFKFRVLTERDEILYLRAIANARNELKPELEATFLKFTAKYLASVRHTRTLENISHSYQFYSPVVRLFKRWLDTHLLLGHITDELAELIAIKPFVDPAPYFIPGSLENGFLKVLKFISQWNWKDDPLILDLVKPEDDIRDTFETSIGAGSELDSKTMKKLSERLTLAQYKGIQMNFTNLRNSDPNGTHLQFFVASKNDPSGILYSSGIPLPIATRLTALAKVAVNLLQTHGLNQQTINLLFTPGLKDYDFVVDLRTPIGLKSSCGILSATEFKNITNDQAPSNFPENLNDLSEKMDPTYQLVKYLNLKYKNSLILSSRKYIGVNGGEKGDKNVITGLIKPLFKGAHKFRVNLDCNVKPVDDENVILNKEAIFHEIAAFGNDMVINFETD</sequence>
<comment type="function">
    <text evidence="4">Involved in nucleolar processing of pre-18S ribosomal RNA and ribosome assembly.</text>
</comment>
<comment type="subunit">
    <text evidence="4 5 6">Interacts with snoRNA U3 (PubMed:15590835). Interacts with MPP10 (PubMed:15590835). Component of the ribosomal small subunit (SSU) processome composed of at least 40 protein subunits and snoRNA U3 (PubMed:15590835). Interacts with UBP10 (PubMed:22902402, PubMed:26149687).</text>
</comment>
<comment type="interaction">
    <interactant intactId="EBI-1878">
        <id>P53254</id>
    </interactant>
    <interactant intactId="EBI-9533">
        <id>P15790</id>
        <label>CKA1</label>
    </interactant>
    <organismsDiffer>false</organismsDiffer>
    <experiments>6</experiments>
</comment>
<comment type="interaction">
    <interactant intactId="EBI-1878">
        <id>P53254</id>
    </interactant>
    <interactant intactId="EBI-9563">
        <id>P43639</id>
        <label>CKB1</label>
    </interactant>
    <organismsDiffer>false</organismsDiffer>
    <experiments>4</experiments>
</comment>
<comment type="interaction">
    <interactant intactId="EBI-1878">
        <id>P53254</id>
    </interactant>
    <interactant intactId="EBI-5633">
        <id>P38719</id>
        <label>DBP8</label>
    </interactant>
    <organismsDiffer>false</organismsDiffer>
    <experiments>2</experiments>
</comment>
<comment type="interaction">
    <interactant intactId="EBI-1878">
        <id>P53254</id>
    </interactant>
    <interactant intactId="EBI-5844">
        <id>P36009</id>
        <label>DHR2</label>
    </interactant>
    <organismsDiffer>false</organismsDiffer>
    <experiments>3</experiments>
</comment>
<comment type="interaction">
    <interactant intactId="EBI-1878">
        <id>P53254</id>
    </interactant>
    <interactant intactId="EBI-1820">
        <id>Q04217</id>
        <label>ECM16</label>
    </interactant>
    <organismsDiffer>false</organismsDiffer>
    <experiments>4</experiments>
</comment>
<comment type="interaction">
    <interactant intactId="EBI-1878">
        <id>P53254</id>
    </interactant>
    <interactant intactId="EBI-6482">
        <id>P38333</id>
        <label>ENP1</label>
    </interactant>
    <organismsDiffer>false</organismsDiffer>
    <experiments>10</experiments>
</comment>
<comment type="interaction">
    <interactant intactId="EBI-1878">
        <id>P53254</id>
    </interactant>
    <interactant intactId="EBI-34121">
        <id>Q06344</id>
        <label>ESF1</label>
    </interactant>
    <organismsDiffer>false</organismsDiffer>
    <experiments>3</experiments>
</comment>
<comment type="interaction">
    <interactant intactId="EBI-1878">
        <id>P53254</id>
    </interactant>
    <interactant intactId="EBI-5612">
        <id>P20448</id>
        <label>HCA4</label>
    </interactant>
    <organismsDiffer>false</organismsDiffer>
    <experiments>4</experiments>
</comment>
<comment type="interaction">
    <interactant intactId="EBI-1878">
        <id>P53254</id>
    </interactant>
    <interactant intactId="EBI-9054">
        <id>P39520</id>
        <label>IFH1</label>
    </interactant>
    <organismsDiffer>false</organismsDiffer>
    <experiments>7</experiments>
</comment>
<comment type="interaction">
    <interactant intactId="EBI-1878">
        <id>P53254</id>
    </interactant>
    <interactant intactId="EBI-21773">
        <id>P25586</id>
        <label>KRR1</label>
    </interactant>
    <organismsDiffer>false</organismsDiffer>
    <experiments>4</experiments>
</comment>
<comment type="interaction">
    <interactant intactId="EBI-1878">
        <id>P53254</id>
    </interactant>
    <interactant intactId="EBI-11168">
        <id>P47083</id>
        <label>MPP10</label>
    </interactant>
    <organismsDiffer>false</organismsDiffer>
    <experiments>5</experiments>
</comment>
<comment type="interaction">
    <interactant intactId="EBI-1878">
        <id>P53254</id>
    </interactant>
    <interactant intactId="EBI-34383">
        <id>Q06106</id>
        <label>MRD1</label>
    </interactant>
    <organismsDiffer>false</organismsDiffer>
    <experiments>3</experiments>
</comment>
<comment type="interaction">
    <interactant intactId="EBI-1878">
        <id>P53254</id>
    </interactant>
    <interactant intactId="EBI-35157">
        <id>Q99207</id>
        <label>NOP14</label>
    </interactant>
    <organismsDiffer>false</organismsDiffer>
    <experiments>8</experiments>
</comment>
<comment type="interaction">
    <interactant intactId="EBI-1878">
        <id>P53254</id>
    </interactant>
    <interactant intactId="EBI-15686">
        <id>P45818</id>
        <label>ROK1</label>
    </interactant>
    <organismsDiffer>false</organismsDiffer>
    <experiments>4</experiments>
</comment>
<comment type="interaction">
    <interactant intactId="EBI-1878">
        <id>P53254</id>
    </interactant>
    <interactant intactId="EBI-31770">
        <id>Q12481</id>
        <label>RRP36</label>
    </interactant>
    <organismsDiffer>false</organismsDiffer>
    <experiments>3</experiments>
</comment>
<comment type="interaction">
    <interactant intactId="EBI-1878">
        <id>P53254</id>
    </interactant>
    <interactant intactId="EBI-16019">
        <id>P25368</id>
        <label>RRP7</label>
    </interactant>
    <organismsDiffer>false</organismsDiffer>
    <experiments>8</experiments>
</comment>
<comment type="interaction">
    <interactant intactId="EBI-1878">
        <id>P53254</id>
    </interactant>
    <interactant intactId="EBI-35124">
        <id>Q06506</id>
        <label>RRP9</label>
    </interactant>
    <organismsDiffer>false</organismsDiffer>
    <experiments>5</experiments>
</comment>
<comment type="interaction">
    <interactant intactId="EBI-1878">
        <id>P53254</id>
    </interactant>
    <interactant intactId="EBI-29168">
        <id>P53866</id>
        <label>SQS1</label>
    </interactant>
    <organismsDiffer>false</organismsDiffer>
    <experiments>3</experiments>
</comment>
<comment type="interaction">
    <interactant intactId="EBI-1878">
        <id>P53254</id>
    </interactant>
    <interactant intactId="EBI-4534">
        <id>P40362</id>
        <label>UTP18</label>
    </interactant>
    <organismsDiffer>false</organismsDiffer>
    <experiments>5</experiments>
</comment>
<comment type="interaction">
    <interactant intactId="EBI-1878">
        <id>P53254</id>
    </interactant>
    <interactant intactId="EBI-1871">
        <id>P35194</id>
        <label>UTP20</label>
    </interactant>
    <organismsDiffer>false</organismsDiffer>
    <experiments>4</experiments>
</comment>
<comment type="interaction">
    <interactant intactId="EBI-1878">
        <id>P53254</id>
    </interactant>
    <interactant intactId="EBI-25113">
        <id>P40498</id>
        <label>UTP25</label>
    </interactant>
    <organismsDiffer>false</organismsDiffer>
    <experiments>3</experiments>
</comment>
<comment type="interaction">
    <interactant intactId="EBI-1878">
        <id>P53254</id>
    </interactant>
    <interactant intactId="EBI-35844">
        <id>Q04177</id>
        <label>UTP5</label>
    </interactant>
    <organismsDiffer>false</organismsDiffer>
    <experiments>3</experiments>
</comment>
<comment type="interaction">
    <interactant intactId="EBI-1878">
        <id>P53254</id>
    </interactant>
    <interactant intactId="EBI-22119">
        <id>Q02354</id>
        <label>UTP6</label>
    </interactant>
    <organismsDiffer>false</organismsDiffer>
    <experiments>7</experiments>
</comment>
<comment type="subcellular location">
    <subcellularLocation>
        <location evidence="2 4">Nucleus</location>
        <location evidence="2 4">Nucleolus</location>
    </subcellularLocation>
</comment>
<comment type="miscellaneous">
    <text evidence="3">Present with 3260 molecules/cell in log phase SD medium.</text>
</comment>
<comment type="similarity">
    <text evidence="7">Belongs to the NRAP family.</text>
</comment>
<reference key="1">
    <citation type="journal article" date="1997" name="Nature">
        <title>The nucleotide sequence of Saccharomyces cerevisiae chromosome VII.</title>
        <authorList>
            <person name="Tettelin H."/>
            <person name="Agostoni-Carbone M.L."/>
            <person name="Albermann K."/>
            <person name="Albers M."/>
            <person name="Arroyo J."/>
            <person name="Backes U."/>
            <person name="Barreiros T."/>
            <person name="Bertani I."/>
            <person name="Bjourson A.J."/>
            <person name="Brueckner M."/>
            <person name="Bruschi C.V."/>
            <person name="Carignani G."/>
            <person name="Castagnoli L."/>
            <person name="Cerdan E."/>
            <person name="Clemente M.L."/>
            <person name="Coblenz A."/>
            <person name="Coglievina M."/>
            <person name="Coissac E."/>
            <person name="Defoor E."/>
            <person name="Del Bino S."/>
            <person name="Delius H."/>
            <person name="Delneri D."/>
            <person name="de Wergifosse P."/>
            <person name="Dujon B."/>
            <person name="Durand P."/>
            <person name="Entian K.-D."/>
            <person name="Eraso P."/>
            <person name="Escribano V."/>
            <person name="Fabiani L."/>
            <person name="Fartmann B."/>
            <person name="Feroli F."/>
            <person name="Feuermann M."/>
            <person name="Frontali L."/>
            <person name="Garcia-Gonzalez M."/>
            <person name="Garcia-Saez M.I."/>
            <person name="Goffeau A."/>
            <person name="Guerreiro P."/>
            <person name="Hani J."/>
            <person name="Hansen M."/>
            <person name="Hebling U."/>
            <person name="Hernandez K."/>
            <person name="Heumann K."/>
            <person name="Hilger F."/>
            <person name="Hofmann B."/>
            <person name="Indge K.J."/>
            <person name="James C.M."/>
            <person name="Klima R."/>
            <person name="Koetter P."/>
            <person name="Kramer B."/>
            <person name="Kramer W."/>
            <person name="Lauquin G."/>
            <person name="Leuther H."/>
            <person name="Louis E.J."/>
            <person name="Maillier E."/>
            <person name="Marconi A."/>
            <person name="Martegani E."/>
            <person name="Mazon M.J."/>
            <person name="Mazzoni C."/>
            <person name="McReynolds A.D.K."/>
            <person name="Melchioretto P."/>
            <person name="Mewes H.-W."/>
            <person name="Minenkova O."/>
            <person name="Mueller-Auer S."/>
            <person name="Nawrocki A."/>
            <person name="Netter P."/>
            <person name="Neu R."/>
            <person name="Nombela C."/>
            <person name="Oliver S.G."/>
            <person name="Panzeri L."/>
            <person name="Paoluzi S."/>
            <person name="Plevani P."/>
            <person name="Portetelle D."/>
            <person name="Portillo F."/>
            <person name="Potier S."/>
            <person name="Purnelle B."/>
            <person name="Rieger M."/>
            <person name="Riles L."/>
            <person name="Rinaldi T."/>
            <person name="Robben J."/>
            <person name="Rodrigues-Pousada C."/>
            <person name="Rodriguez-Belmonte E."/>
            <person name="Rodriguez-Torres A.M."/>
            <person name="Rose M."/>
            <person name="Ruzzi M."/>
            <person name="Saliola M."/>
            <person name="Sanchez-Perez M."/>
            <person name="Schaefer B."/>
            <person name="Schaefer M."/>
            <person name="Scharfe M."/>
            <person name="Schmidheini T."/>
            <person name="Schreer A."/>
            <person name="Skala J."/>
            <person name="Souciet J.-L."/>
            <person name="Steensma H.Y."/>
            <person name="Talla E."/>
            <person name="Thierry A."/>
            <person name="Vandenbol M."/>
            <person name="van der Aart Q.J.M."/>
            <person name="Van Dyck L."/>
            <person name="Vanoni M."/>
            <person name="Verhasselt P."/>
            <person name="Voet M."/>
            <person name="Volckaert G."/>
            <person name="Wambutt R."/>
            <person name="Watson M.D."/>
            <person name="Weber N."/>
            <person name="Wedler E."/>
            <person name="Wedler H."/>
            <person name="Wipfli P."/>
            <person name="Wolf K."/>
            <person name="Wright L.F."/>
            <person name="Zaccaria P."/>
            <person name="Zimmermann M."/>
            <person name="Zollner A."/>
            <person name="Kleine K."/>
        </authorList>
    </citation>
    <scope>NUCLEOTIDE SEQUENCE [LARGE SCALE GENOMIC DNA]</scope>
    <source>
        <strain>ATCC 204508 / S288c</strain>
    </source>
</reference>
<reference key="2">
    <citation type="journal article" date="2014" name="G3 (Bethesda)">
        <title>The reference genome sequence of Saccharomyces cerevisiae: Then and now.</title>
        <authorList>
            <person name="Engel S.R."/>
            <person name="Dietrich F.S."/>
            <person name="Fisk D.G."/>
            <person name="Binkley G."/>
            <person name="Balakrishnan R."/>
            <person name="Costanzo M.C."/>
            <person name="Dwight S.S."/>
            <person name="Hitz B.C."/>
            <person name="Karra K."/>
            <person name="Nash R.S."/>
            <person name="Weng S."/>
            <person name="Wong E.D."/>
            <person name="Lloyd P."/>
            <person name="Skrzypek M.S."/>
            <person name="Miyasato S.R."/>
            <person name="Simison M."/>
            <person name="Cherry J.M."/>
        </authorList>
    </citation>
    <scope>GENOME REANNOTATION</scope>
    <source>
        <strain>ATCC 204508 / S288c</strain>
    </source>
</reference>
<reference key="3">
    <citation type="journal article" date="2003" name="Nature">
        <title>Global analysis of protein localization in budding yeast.</title>
        <authorList>
            <person name="Huh W.-K."/>
            <person name="Falvo J.V."/>
            <person name="Gerke L.C."/>
            <person name="Carroll A.S."/>
            <person name="Howson R.W."/>
            <person name="Weissman J.S."/>
            <person name="O'Shea E.K."/>
        </authorList>
    </citation>
    <scope>SUBCELLULAR LOCATION [LARGE SCALE ANALYSIS]</scope>
</reference>
<reference key="4">
    <citation type="journal article" date="2003" name="Nature">
        <title>Global analysis of protein expression in yeast.</title>
        <authorList>
            <person name="Ghaemmaghami S."/>
            <person name="Huh W.-K."/>
            <person name="Bower K."/>
            <person name="Howson R.W."/>
            <person name="Belle A."/>
            <person name="Dephoure N."/>
            <person name="O'Shea E.K."/>
            <person name="Weissman J.S."/>
        </authorList>
    </citation>
    <scope>LEVEL OF PROTEIN EXPRESSION [LARGE SCALE ANALYSIS]</scope>
</reference>
<reference key="5">
    <citation type="journal article" date="2004" name="Eukaryot. Cell">
        <title>The small-subunit processome is a ribosome assembly intermediate.</title>
        <authorList>
            <person name="Bernstein K.A."/>
            <person name="Gallagher J.E.G."/>
            <person name="Mitchell B.M."/>
            <person name="Granneman S."/>
            <person name="Baserga S.J."/>
        </authorList>
    </citation>
    <scope>FUNCTION</scope>
    <scope>INTERACTION WITH MPP10 AND SNORNA U3</scope>
    <scope>IDENTIFICATION IN SSU PROCESSOME</scope>
    <scope>SUBCELLULAR LOCATION</scope>
</reference>
<reference key="6">
    <citation type="journal article" date="2007" name="J. Proteome Res.">
        <title>Large-scale phosphorylation analysis of alpha-factor-arrested Saccharomyces cerevisiae.</title>
        <authorList>
            <person name="Li X."/>
            <person name="Gerber S.A."/>
            <person name="Rudner A.D."/>
            <person name="Beausoleil S.A."/>
            <person name="Haas W."/>
            <person name="Villen J."/>
            <person name="Elias J.E."/>
            <person name="Gygi S.P."/>
        </authorList>
    </citation>
    <scope>PHOSPHORYLATION [LARGE SCALE ANALYSIS] AT SER-10</scope>
    <scope>IDENTIFICATION BY MASS SPECTROMETRY [LARGE SCALE ANALYSIS]</scope>
    <source>
        <strain>ADR376</strain>
    </source>
</reference>
<reference key="7">
    <citation type="journal article" date="2007" name="Proc. Natl. Acad. Sci. U.S.A.">
        <title>Analysis of phosphorylation sites on proteins from Saccharomyces cerevisiae by electron transfer dissociation (ETD) mass spectrometry.</title>
        <authorList>
            <person name="Chi A."/>
            <person name="Huttenhower C."/>
            <person name="Geer L.Y."/>
            <person name="Coon J.J."/>
            <person name="Syka J.E.P."/>
            <person name="Bai D.L."/>
            <person name="Shabanowitz J."/>
            <person name="Burke D.J."/>
            <person name="Troyanskaya O.G."/>
            <person name="Hunt D.F."/>
        </authorList>
    </citation>
    <scope>PHOSPHORYLATION [LARGE SCALE ANALYSIS] AT SER-10</scope>
    <scope>IDENTIFICATION BY MASS SPECTROMETRY [LARGE SCALE ANALYSIS]</scope>
</reference>
<reference key="8">
    <citation type="journal article" date="2008" name="Mol. Cell. Proteomics">
        <title>A multidimensional chromatography technology for in-depth phosphoproteome analysis.</title>
        <authorList>
            <person name="Albuquerque C.P."/>
            <person name="Smolka M.B."/>
            <person name="Payne S.H."/>
            <person name="Bafna V."/>
            <person name="Eng J."/>
            <person name="Zhou H."/>
        </authorList>
    </citation>
    <scope>PHOSPHORYLATION [LARGE SCALE ANALYSIS] AT SER-10</scope>
    <scope>IDENTIFICATION BY MASS SPECTROMETRY [LARGE SCALE ANALYSIS]</scope>
</reference>
<reference key="9">
    <citation type="journal article" date="2009" name="Science">
        <title>Global analysis of Cdk1 substrate phosphorylation sites provides insights into evolution.</title>
        <authorList>
            <person name="Holt L.J."/>
            <person name="Tuch B.B."/>
            <person name="Villen J."/>
            <person name="Johnson A.D."/>
            <person name="Gygi S.P."/>
            <person name="Morgan D.O."/>
        </authorList>
    </citation>
    <scope>PHOSPHORYLATION [LARGE SCALE ANALYSIS] AT SER-10; SER-58; THR-60 AND SER-64</scope>
    <scope>IDENTIFICATION BY MASS SPECTROMETRY [LARGE SCALE ANALYSIS]</scope>
</reference>
<reference key="10">
    <citation type="journal article" date="2012" name="Cell Rep.">
        <title>A conserved deubiquitinating enzyme controls cell growth by regulating RNA polymerase I stability.</title>
        <authorList>
            <person name="Richardson L.A."/>
            <person name="Reed B.J."/>
            <person name="Charette J.M."/>
            <person name="Freed E.F."/>
            <person name="Fredrickson E.K."/>
            <person name="Locke M.N."/>
            <person name="Baserga S.J."/>
            <person name="Gardner R.G."/>
        </authorList>
    </citation>
    <scope>INTERACTION WITH UBP10</scope>
</reference>
<reference key="11">
    <citation type="journal article" date="2015" name="J. Biol. Chem.">
        <title>A conserved deubiquitinating enzyme uses intrinsically disordered regions to scaffold multiple protein interaction sites.</title>
        <authorList>
            <person name="Reed B.J."/>
            <person name="Locke M.N."/>
            <person name="Gardner R.G."/>
        </authorList>
    </citation>
    <scope>INTERACTION WITH UBP10</scope>
</reference>
<keyword id="KW-0002">3D-structure</keyword>
<keyword id="KW-0539">Nucleus</keyword>
<keyword id="KW-0597">Phosphoprotein</keyword>
<keyword id="KW-1185">Reference proteome</keyword>
<keyword id="KW-0687">Ribonucleoprotein</keyword>
<keyword id="KW-0690">Ribosome biogenesis</keyword>
<keyword id="KW-0694">RNA-binding</keyword>
<keyword id="KW-0698">rRNA processing</keyword>
<accession>P53254</accession>
<accession>D6VUM2</accession>
<protein>
    <recommendedName>
        <fullName>U3 small nucleolar RNA-associated protein 22</fullName>
        <shortName>U3 snoRNA-associated protein 22</shortName>
    </recommendedName>
    <alternativeName>
        <fullName>U three protein 22</fullName>
    </alternativeName>
</protein>